<proteinExistence type="inferred from homology"/>
<comment type="function">
    <text evidence="1">Catalyzes the formation of S-adenosylmethionine from methionine and ATP.</text>
</comment>
<comment type="catalytic activity">
    <reaction evidence="1">
        <text>L-methionine + ATP + H2O = S-adenosyl-L-methionine + phosphate + diphosphate</text>
        <dbReference type="Rhea" id="RHEA:21080"/>
        <dbReference type="ChEBI" id="CHEBI:15377"/>
        <dbReference type="ChEBI" id="CHEBI:30616"/>
        <dbReference type="ChEBI" id="CHEBI:33019"/>
        <dbReference type="ChEBI" id="CHEBI:43474"/>
        <dbReference type="ChEBI" id="CHEBI:57844"/>
        <dbReference type="ChEBI" id="CHEBI:59789"/>
        <dbReference type="EC" id="2.5.1.6"/>
    </reaction>
</comment>
<comment type="cofactor">
    <cofactor evidence="1">
        <name>Mg(2+)</name>
        <dbReference type="ChEBI" id="CHEBI:18420"/>
    </cofactor>
</comment>
<comment type="pathway">
    <text evidence="1">Amino-acid biosynthesis; S-adenosyl-L-methionine biosynthesis; S-adenosyl-L-methionine from L-methionine: step 1/1.</text>
</comment>
<comment type="similarity">
    <text evidence="1">Belongs to the AdoMet synthase 2 family.</text>
</comment>
<gene>
    <name evidence="1" type="primary">mat</name>
    <name type="ordered locus">MA_0216</name>
</gene>
<accession>Q8TU57</accession>
<sequence length="398" mass="44171">MARNIKVEELLQTPIEKQRIELVERKGIGHPDSISDGLAEAVSRALCREYISKCGTVLHHNTDETQIVAGRSSPKFGGGEVLQPIYMLLVGRATKEFEGVELATESVALQAARNYLRKTMVNMDLERDVIMDCKLGTGSSDLRDVFKRDRVPVANDTSFGVGHAPFSELENIVYNTERRLLTDLKSRMPAIGEDMKVMGLRDGEDIALTICSGMIGKYIDDLDSYINMTQEMKIYVEELATHYTERDVNVYINTGDNLKTSCVFLTVTGTSAEMGDDGSVGRGNRCNGLITPNRPMSMEATSGKNPINHIGKIYNLLSTQMARDIVKQVPEVQDVYIRLLSQIAKPIDQPLVASAQIIPKEGTSFEKVKSEAEVVIDDWLSNVTKITEMVIRGELNTF</sequence>
<name>METK_METAC</name>
<evidence type="ECO:0000255" key="1">
    <source>
        <dbReference type="HAMAP-Rule" id="MF_00136"/>
    </source>
</evidence>
<keyword id="KW-0067">ATP-binding</keyword>
<keyword id="KW-0460">Magnesium</keyword>
<keyword id="KW-0547">Nucleotide-binding</keyword>
<keyword id="KW-0554">One-carbon metabolism</keyword>
<keyword id="KW-1185">Reference proteome</keyword>
<keyword id="KW-0808">Transferase</keyword>
<dbReference type="EC" id="2.5.1.6" evidence="1"/>
<dbReference type="EMBL" id="AE010299">
    <property type="protein sequence ID" value="AAM03669.1"/>
    <property type="molecule type" value="Genomic_DNA"/>
</dbReference>
<dbReference type="RefSeq" id="WP_011020274.1">
    <property type="nucleotide sequence ID" value="NC_003552.1"/>
</dbReference>
<dbReference type="SMR" id="Q8TU57"/>
<dbReference type="FunCoup" id="Q8TU57">
    <property type="interactions" value="176"/>
</dbReference>
<dbReference type="STRING" id="188937.MA_0216"/>
<dbReference type="EnsemblBacteria" id="AAM03669">
    <property type="protein sequence ID" value="AAM03669"/>
    <property type="gene ID" value="MA_0216"/>
</dbReference>
<dbReference type="GeneID" id="1472108"/>
<dbReference type="KEGG" id="mac:MA_0216"/>
<dbReference type="HOGENOM" id="CLU_057642_0_0_2"/>
<dbReference type="InParanoid" id="Q8TU57"/>
<dbReference type="OrthoDB" id="204488at2157"/>
<dbReference type="PhylomeDB" id="Q8TU57"/>
<dbReference type="UniPathway" id="UPA00315">
    <property type="reaction ID" value="UER00080"/>
</dbReference>
<dbReference type="Proteomes" id="UP000002487">
    <property type="component" value="Chromosome"/>
</dbReference>
<dbReference type="GO" id="GO:0005524">
    <property type="term" value="F:ATP binding"/>
    <property type="evidence" value="ECO:0007669"/>
    <property type="project" value="UniProtKB-UniRule"/>
</dbReference>
<dbReference type="GO" id="GO:0000287">
    <property type="term" value="F:magnesium ion binding"/>
    <property type="evidence" value="ECO:0007669"/>
    <property type="project" value="UniProtKB-UniRule"/>
</dbReference>
<dbReference type="GO" id="GO:0004478">
    <property type="term" value="F:methionine adenosyltransferase activity"/>
    <property type="evidence" value="ECO:0007669"/>
    <property type="project" value="UniProtKB-UniRule"/>
</dbReference>
<dbReference type="GO" id="GO:0006730">
    <property type="term" value="P:one-carbon metabolic process"/>
    <property type="evidence" value="ECO:0007669"/>
    <property type="project" value="UniProtKB-KW"/>
</dbReference>
<dbReference type="GO" id="GO:0006556">
    <property type="term" value="P:S-adenosylmethionine biosynthetic process"/>
    <property type="evidence" value="ECO:0007669"/>
    <property type="project" value="UniProtKB-UniRule"/>
</dbReference>
<dbReference type="Gene3D" id="3.30.300.10">
    <property type="match status" value="1"/>
</dbReference>
<dbReference type="Gene3D" id="3.30.300.280">
    <property type="entry name" value="S-adenosylmethionine synthetase, C-terminal domain"/>
    <property type="match status" value="1"/>
</dbReference>
<dbReference type="HAMAP" id="MF_00136">
    <property type="entry name" value="S_AdoMet_synth2"/>
    <property type="match status" value="1"/>
</dbReference>
<dbReference type="InterPro" id="IPR027790">
    <property type="entry name" value="AdoMet_synthase_2_family"/>
</dbReference>
<dbReference type="InterPro" id="IPR042544">
    <property type="entry name" value="AdoMet_synthase_3"/>
</dbReference>
<dbReference type="InterPro" id="IPR002795">
    <property type="entry name" value="S-AdoMet_synthetase_arc"/>
</dbReference>
<dbReference type="NCBIfam" id="NF003364">
    <property type="entry name" value="PRK04439.1-3"/>
    <property type="match status" value="1"/>
</dbReference>
<dbReference type="NCBIfam" id="NF003366">
    <property type="entry name" value="PRK04439.1-5"/>
    <property type="match status" value="1"/>
</dbReference>
<dbReference type="PANTHER" id="PTHR36697">
    <property type="entry name" value="S-ADENOSYLMETHIONINE SYNTHASE"/>
    <property type="match status" value="1"/>
</dbReference>
<dbReference type="PANTHER" id="PTHR36697:SF1">
    <property type="entry name" value="S-ADENOSYLMETHIONINE SYNTHASE"/>
    <property type="match status" value="1"/>
</dbReference>
<dbReference type="Pfam" id="PF01941">
    <property type="entry name" value="AdoMet_Synthase"/>
    <property type="match status" value="1"/>
</dbReference>
<reference key="1">
    <citation type="journal article" date="2002" name="Genome Res.">
        <title>The genome of Methanosarcina acetivorans reveals extensive metabolic and physiological diversity.</title>
        <authorList>
            <person name="Galagan J.E."/>
            <person name="Nusbaum C."/>
            <person name="Roy A."/>
            <person name="Endrizzi M.G."/>
            <person name="Macdonald P."/>
            <person name="FitzHugh W."/>
            <person name="Calvo S."/>
            <person name="Engels R."/>
            <person name="Smirnov S."/>
            <person name="Atnoor D."/>
            <person name="Brown A."/>
            <person name="Allen N."/>
            <person name="Naylor J."/>
            <person name="Stange-Thomann N."/>
            <person name="DeArellano K."/>
            <person name="Johnson R."/>
            <person name="Linton L."/>
            <person name="McEwan P."/>
            <person name="McKernan K."/>
            <person name="Talamas J."/>
            <person name="Tirrell A."/>
            <person name="Ye W."/>
            <person name="Zimmer A."/>
            <person name="Barber R.D."/>
            <person name="Cann I."/>
            <person name="Graham D.E."/>
            <person name="Grahame D.A."/>
            <person name="Guss A.M."/>
            <person name="Hedderich R."/>
            <person name="Ingram-Smith C."/>
            <person name="Kuettner H.C."/>
            <person name="Krzycki J.A."/>
            <person name="Leigh J.A."/>
            <person name="Li W."/>
            <person name="Liu J."/>
            <person name="Mukhopadhyay B."/>
            <person name="Reeve J.N."/>
            <person name="Smith K."/>
            <person name="Springer T.A."/>
            <person name="Umayam L.A."/>
            <person name="White O."/>
            <person name="White R.H."/>
            <person name="de Macario E.C."/>
            <person name="Ferry J.G."/>
            <person name="Jarrell K.F."/>
            <person name="Jing H."/>
            <person name="Macario A.J.L."/>
            <person name="Paulsen I.T."/>
            <person name="Pritchett M."/>
            <person name="Sowers K.R."/>
            <person name="Swanson R.V."/>
            <person name="Zinder S.H."/>
            <person name="Lander E."/>
            <person name="Metcalf W.W."/>
            <person name="Birren B."/>
        </authorList>
    </citation>
    <scope>NUCLEOTIDE SEQUENCE [LARGE SCALE GENOMIC DNA]</scope>
    <source>
        <strain>ATCC 35395 / DSM 2834 / JCM 12185 / C2A</strain>
    </source>
</reference>
<organism>
    <name type="scientific">Methanosarcina acetivorans (strain ATCC 35395 / DSM 2834 / JCM 12185 / C2A)</name>
    <dbReference type="NCBI Taxonomy" id="188937"/>
    <lineage>
        <taxon>Archaea</taxon>
        <taxon>Methanobacteriati</taxon>
        <taxon>Methanobacteriota</taxon>
        <taxon>Stenosarchaea group</taxon>
        <taxon>Methanomicrobia</taxon>
        <taxon>Methanosarcinales</taxon>
        <taxon>Methanosarcinaceae</taxon>
        <taxon>Methanosarcina</taxon>
    </lineage>
</organism>
<feature type="chain" id="PRO_0000150027" description="S-adenosylmethionine synthase">
    <location>
        <begin position="1"/>
        <end position="398"/>
    </location>
</feature>
<feature type="binding site" evidence="1">
    <location>
        <begin position="136"/>
        <end position="141"/>
    </location>
    <ligand>
        <name>ATP</name>
        <dbReference type="ChEBI" id="CHEBI:30616"/>
    </ligand>
</feature>
<protein>
    <recommendedName>
        <fullName evidence="1">S-adenosylmethionine synthase</fullName>
        <shortName evidence="1">AdoMet synthase</shortName>
        <ecNumber evidence="1">2.5.1.6</ecNumber>
    </recommendedName>
    <alternativeName>
        <fullName evidence="1">Methionine adenosyltransferase</fullName>
    </alternativeName>
</protein>